<accession>Q2S4T0</accession>
<feature type="chain" id="PRO_0000237924" description="Shikimate kinase">
    <location>
        <begin position="1"/>
        <end position="204"/>
    </location>
</feature>
<feature type="binding site" evidence="1">
    <location>
        <begin position="35"/>
        <end position="40"/>
    </location>
    <ligand>
        <name>ATP</name>
        <dbReference type="ChEBI" id="CHEBI:30616"/>
    </ligand>
</feature>
<feature type="binding site" evidence="1">
    <location>
        <position position="39"/>
    </location>
    <ligand>
        <name>Mg(2+)</name>
        <dbReference type="ChEBI" id="CHEBI:18420"/>
    </ligand>
</feature>
<feature type="binding site" evidence="1">
    <location>
        <position position="57"/>
    </location>
    <ligand>
        <name>substrate</name>
    </ligand>
</feature>
<feature type="binding site" evidence="1">
    <location>
        <position position="81"/>
    </location>
    <ligand>
        <name>substrate</name>
    </ligand>
</feature>
<feature type="binding site" evidence="1">
    <location>
        <position position="103"/>
    </location>
    <ligand>
        <name>substrate</name>
    </ligand>
</feature>
<feature type="binding site" evidence="1">
    <location>
        <position position="142"/>
    </location>
    <ligand>
        <name>ATP</name>
        <dbReference type="ChEBI" id="CHEBI:30616"/>
    </ligand>
</feature>
<feature type="binding site" evidence="1">
    <location>
        <position position="169"/>
    </location>
    <ligand>
        <name>substrate</name>
    </ligand>
</feature>
<protein>
    <recommendedName>
        <fullName evidence="1">Shikimate kinase</fullName>
        <shortName evidence="1">SK</shortName>
        <ecNumber evidence="1">2.7.1.71</ecNumber>
    </recommendedName>
</protein>
<dbReference type="EC" id="2.7.1.71" evidence="1"/>
<dbReference type="EMBL" id="CP000159">
    <property type="protein sequence ID" value="ABC44146.1"/>
    <property type="molecule type" value="Genomic_DNA"/>
</dbReference>
<dbReference type="RefSeq" id="YP_444801.1">
    <property type="nucleotide sequence ID" value="NC_007677.1"/>
</dbReference>
<dbReference type="SMR" id="Q2S4T0"/>
<dbReference type="STRING" id="309807.SRU_0663"/>
<dbReference type="EnsemblBacteria" id="ABC44146">
    <property type="protein sequence ID" value="ABC44146"/>
    <property type="gene ID" value="SRU_0663"/>
</dbReference>
<dbReference type="KEGG" id="sru:SRU_0663"/>
<dbReference type="PATRIC" id="fig|309807.25.peg.680"/>
<dbReference type="eggNOG" id="COG0703">
    <property type="taxonomic scope" value="Bacteria"/>
</dbReference>
<dbReference type="HOGENOM" id="CLU_057607_2_1_10"/>
<dbReference type="OrthoDB" id="9800332at2"/>
<dbReference type="UniPathway" id="UPA00053">
    <property type="reaction ID" value="UER00088"/>
</dbReference>
<dbReference type="Proteomes" id="UP000008674">
    <property type="component" value="Chromosome"/>
</dbReference>
<dbReference type="GO" id="GO:0005829">
    <property type="term" value="C:cytosol"/>
    <property type="evidence" value="ECO:0007669"/>
    <property type="project" value="TreeGrafter"/>
</dbReference>
<dbReference type="GO" id="GO:0005524">
    <property type="term" value="F:ATP binding"/>
    <property type="evidence" value="ECO:0007669"/>
    <property type="project" value="UniProtKB-UniRule"/>
</dbReference>
<dbReference type="GO" id="GO:0000287">
    <property type="term" value="F:magnesium ion binding"/>
    <property type="evidence" value="ECO:0007669"/>
    <property type="project" value="UniProtKB-UniRule"/>
</dbReference>
<dbReference type="GO" id="GO:0004765">
    <property type="term" value="F:shikimate kinase activity"/>
    <property type="evidence" value="ECO:0007669"/>
    <property type="project" value="UniProtKB-UniRule"/>
</dbReference>
<dbReference type="GO" id="GO:0008652">
    <property type="term" value="P:amino acid biosynthetic process"/>
    <property type="evidence" value="ECO:0007669"/>
    <property type="project" value="UniProtKB-KW"/>
</dbReference>
<dbReference type="GO" id="GO:0009073">
    <property type="term" value="P:aromatic amino acid family biosynthetic process"/>
    <property type="evidence" value="ECO:0007669"/>
    <property type="project" value="UniProtKB-KW"/>
</dbReference>
<dbReference type="GO" id="GO:0009423">
    <property type="term" value="P:chorismate biosynthetic process"/>
    <property type="evidence" value="ECO:0007669"/>
    <property type="project" value="UniProtKB-UniRule"/>
</dbReference>
<dbReference type="CDD" id="cd00464">
    <property type="entry name" value="SK"/>
    <property type="match status" value="1"/>
</dbReference>
<dbReference type="Gene3D" id="3.40.50.300">
    <property type="entry name" value="P-loop containing nucleotide triphosphate hydrolases"/>
    <property type="match status" value="1"/>
</dbReference>
<dbReference type="HAMAP" id="MF_00109">
    <property type="entry name" value="Shikimate_kinase"/>
    <property type="match status" value="1"/>
</dbReference>
<dbReference type="InterPro" id="IPR027417">
    <property type="entry name" value="P-loop_NTPase"/>
</dbReference>
<dbReference type="InterPro" id="IPR031322">
    <property type="entry name" value="Shikimate/glucono_kinase"/>
</dbReference>
<dbReference type="InterPro" id="IPR000623">
    <property type="entry name" value="Shikimate_kinase/TSH1"/>
</dbReference>
<dbReference type="InterPro" id="IPR023000">
    <property type="entry name" value="Shikimate_kinase_CS"/>
</dbReference>
<dbReference type="PANTHER" id="PTHR21087">
    <property type="entry name" value="SHIKIMATE KINASE"/>
    <property type="match status" value="1"/>
</dbReference>
<dbReference type="PANTHER" id="PTHR21087:SF16">
    <property type="entry name" value="SHIKIMATE KINASE 1, CHLOROPLASTIC"/>
    <property type="match status" value="1"/>
</dbReference>
<dbReference type="Pfam" id="PF01202">
    <property type="entry name" value="SKI"/>
    <property type="match status" value="1"/>
</dbReference>
<dbReference type="PRINTS" id="PR01100">
    <property type="entry name" value="SHIKIMTKNASE"/>
</dbReference>
<dbReference type="SUPFAM" id="SSF52540">
    <property type="entry name" value="P-loop containing nucleoside triphosphate hydrolases"/>
    <property type="match status" value="1"/>
</dbReference>
<dbReference type="PROSITE" id="PS01128">
    <property type="entry name" value="SHIKIMATE_KINASE"/>
    <property type="match status" value="1"/>
</dbReference>
<sequence>MEWSLAEDDALAYSPLFLPNFRPFPMRVYLTGFMASGKSTVGPEAAARLGQPFLDLDRLITAHAGRSIPALFAEEGEARFRELERDLLRRTATTDDLVVALGGGALLDDANRAFAKEHGLVLYLEAPVDTLLGRVTGDDTRRPLLEDDTGTRLPRDEQRTRIEAMLDERRPAYEAAHHTLDADRPVEEVVGRIVEVVTAQAEPA</sequence>
<comment type="function">
    <text evidence="1">Catalyzes the specific phosphorylation of the 3-hydroxyl group of shikimic acid using ATP as a cosubstrate.</text>
</comment>
<comment type="catalytic activity">
    <reaction evidence="1">
        <text>shikimate + ATP = 3-phosphoshikimate + ADP + H(+)</text>
        <dbReference type="Rhea" id="RHEA:13121"/>
        <dbReference type="ChEBI" id="CHEBI:15378"/>
        <dbReference type="ChEBI" id="CHEBI:30616"/>
        <dbReference type="ChEBI" id="CHEBI:36208"/>
        <dbReference type="ChEBI" id="CHEBI:145989"/>
        <dbReference type="ChEBI" id="CHEBI:456216"/>
        <dbReference type="EC" id="2.7.1.71"/>
    </reaction>
</comment>
<comment type="cofactor">
    <cofactor evidence="1">
        <name>Mg(2+)</name>
        <dbReference type="ChEBI" id="CHEBI:18420"/>
    </cofactor>
    <text evidence="1">Binds 1 Mg(2+) ion per subunit.</text>
</comment>
<comment type="pathway">
    <text evidence="1">Metabolic intermediate biosynthesis; chorismate biosynthesis; chorismate from D-erythrose 4-phosphate and phosphoenolpyruvate: step 5/7.</text>
</comment>
<comment type="subunit">
    <text evidence="1">Monomer.</text>
</comment>
<comment type="subcellular location">
    <subcellularLocation>
        <location evidence="1">Cytoplasm</location>
    </subcellularLocation>
</comment>
<comment type="similarity">
    <text evidence="1">Belongs to the shikimate kinase family.</text>
</comment>
<proteinExistence type="inferred from homology"/>
<gene>
    <name evidence="1" type="primary">aroK</name>
    <name type="ordered locus">SRU_0663</name>
</gene>
<organism>
    <name type="scientific">Salinibacter ruber (strain DSM 13855 / M31)</name>
    <dbReference type="NCBI Taxonomy" id="309807"/>
    <lineage>
        <taxon>Bacteria</taxon>
        <taxon>Pseudomonadati</taxon>
        <taxon>Rhodothermota</taxon>
        <taxon>Rhodothermia</taxon>
        <taxon>Rhodothermales</taxon>
        <taxon>Salinibacteraceae</taxon>
        <taxon>Salinibacter</taxon>
    </lineage>
</organism>
<reference key="1">
    <citation type="journal article" date="2005" name="Proc. Natl. Acad. Sci. U.S.A.">
        <title>The genome of Salinibacter ruber: convergence and gene exchange among hyperhalophilic bacteria and archaea.</title>
        <authorList>
            <person name="Mongodin E.F."/>
            <person name="Nelson K.E."/>
            <person name="Daugherty S."/>
            <person name="DeBoy R.T."/>
            <person name="Wister J."/>
            <person name="Khouri H."/>
            <person name="Weidman J."/>
            <person name="Walsh D.A."/>
            <person name="Papke R.T."/>
            <person name="Sanchez Perez G."/>
            <person name="Sharma A.K."/>
            <person name="Nesbo C.L."/>
            <person name="MacLeod D."/>
            <person name="Bapteste E."/>
            <person name="Doolittle W.F."/>
            <person name="Charlebois R.L."/>
            <person name="Legault B."/>
            <person name="Rodriguez-Valera F."/>
        </authorList>
    </citation>
    <scope>NUCLEOTIDE SEQUENCE [LARGE SCALE GENOMIC DNA]</scope>
    <source>
        <strain>DSM 13855 / CECT 5946 / M31</strain>
    </source>
</reference>
<keyword id="KW-0028">Amino-acid biosynthesis</keyword>
<keyword id="KW-0057">Aromatic amino acid biosynthesis</keyword>
<keyword id="KW-0067">ATP-binding</keyword>
<keyword id="KW-0963">Cytoplasm</keyword>
<keyword id="KW-0418">Kinase</keyword>
<keyword id="KW-0460">Magnesium</keyword>
<keyword id="KW-0479">Metal-binding</keyword>
<keyword id="KW-0547">Nucleotide-binding</keyword>
<keyword id="KW-1185">Reference proteome</keyword>
<keyword id="KW-0808">Transferase</keyword>
<name>AROK_SALRD</name>
<evidence type="ECO:0000255" key="1">
    <source>
        <dbReference type="HAMAP-Rule" id="MF_00109"/>
    </source>
</evidence>